<evidence type="ECO:0000255" key="1">
    <source>
        <dbReference type="HAMAP-Rule" id="MF_04069"/>
    </source>
</evidence>
<evidence type="ECO:0000256" key="2">
    <source>
        <dbReference type="SAM" id="MobiDB-lite"/>
    </source>
</evidence>
<proteinExistence type="inferred from homology"/>
<sequence length="97" mass="11216">MSLLTEVETPTRNGWECRCSDSSDPLVIAASIIGILHLILWILDRLFFKCIYRRIKYGLKRGPSTEGVPESMREEYRQEQQSAVDVDDSHFVNIELE</sequence>
<dbReference type="EMBL" id="CY014672">
    <property type="protein sequence ID" value="ABI84536.1"/>
    <property type="molecule type" value="Genomic_RNA"/>
</dbReference>
<dbReference type="SMR" id="Q0A447"/>
<dbReference type="Proteomes" id="UP000008217">
    <property type="component" value="Genome"/>
</dbReference>
<dbReference type="GO" id="GO:0020002">
    <property type="term" value="C:host cell plasma membrane"/>
    <property type="evidence" value="ECO:0007669"/>
    <property type="project" value="UniProtKB-SubCell"/>
</dbReference>
<dbReference type="GO" id="GO:0016020">
    <property type="term" value="C:membrane"/>
    <property type="evidence" value="ECO:0007669"/>
    <property type="project" value="UniProtKB-UniRule"/>
</dbReference>
<dbReference type="GO" id="GO:0055036">
    <property type="term" value="C:virion membrane"/>
    <property type="evidence" value="ECO:0007669"/>
    <property type="project" value="UniProtKB-SubCell"/>
</dbReference>
<dbReference type="GO" id="GO:0005216">
    <property type="term" value="F:monoatomic ion channel activity"/>
    <property type="evidence" value="ECO:0007669"/>
    <property type="project" value="UniProtKB-UniRule"/>
</dbReference>
<dbReference type="GO" id="GO:0015078">
    <property type="term" value="F:proton transmembrane transporter activity"/>
    <property type="evidence" value="ECO:0007669"/>
    <property type="project" value="UniProtKB-UniRule"/>
</dbReference>
<dbReference type="GO" id="GO:0051259">
    <property type="term" value="P:protein complex oligomerization"/>
    <property type="evidence" value="ECO:0007669"/>
    <property type="project" value="UniProtKB-UniRule"/>
</dbReference>
<dbReference type="GO" id="GO:0044694">
    <property type="term" value="P:symbiont genome entry into host cell via pore formation in plasma membrane"/>
    <property type="evidence" value="ECO:0007669"/>
    <property type="project" value="UniProtKB-UniRule"/>
</dbReference>
<dbReference type="GO" id="GO:0140321">
    <property type="term" value="P:symbiont-mediated suppression of host autophagy"/>
    <property type="evidence" value="ECO:0007669"/>
    <property type="project" value="UniProtKB-KW"/>
</dbReference>
<dbReference type="Gene3D" id="6.10.250.1640">
    <property type="match status" value="1"/>
</dbReference>
<dbReference type="HAMAP" id="MF_04069">
    <property type="entry name" value="INFV_M2"/>
    <property type="match status" value="1"/>
</dbReference>
<dbReference type="InterPro" id="IPR002089">
    <property type="entry name" value="Flu_M2"/>
</dbReference>
<dbReference type="Pfam" id="PF00599">
    <property type="entry name" value="Flu_M2"/>
    <property type="match status" value="1"/>
</dbReference>
<protein>
    <recommendedName>
        <fullName evidence="1">Matrix protein 2</fullName>
    </recommendedName>
    <alternativeName>
        <fullName evidence="1">Proton channel protein M2</fullName>
    </alternativeName>
</protein>
<name>M2_I49A1</name>
<keyword id="KW-0025">Alternative splicing</keyword>
<keyword id="KW-1015">Disulfide bond</keyword>
<keyword id="KW-1032">Host cell membrane</keyword>
<keyword id="KW-1043">Host membrane</keyword>
<keyword id="KW-0945">Host-virus interaction</keyword>
<keyword id="KW-0375">Hydrogen ion transport</keyword>
<keyword id="KW-1083">Inhibition of host autophagy by virus</keyword>
<keyword id="KW-0407">Ion channel</keyword>
<keyword id="KW-0406">Ion transport</keyword>
<keyword id="KW-0449">Lipoprotein</keyword>
<keyword id="KW-0472">Membrane</keyword>
<keyword id="KW-0564">Palmitate</keyword>
<keyword id="KW-0597">Phosphoprotein</keyword>
<keyword id="KW-0735">Signal-anchor</keyword>
<keyword id="KW-0812">Transmembrane</keyword>
<keyword id="KW-1133">Transmembrane helix</keyword>
<keyword id="KW-0813">Transport</keyword>
<keyword id="KW-1182">Viral ion channel</keyword>
<keyword id="KW-0946">Virion</keyword>
<feature type="chain" id="PRO_0000326336" description="Matrix protein 2">
    <location>
        <begin position="1"/>
        <end position="97"/>
    </location>
</feature>
<feature type="topological domain" description="Virion surface" evidence="1">
    <location>
        <begin position="1"/>
        <end position="22"/>
    </location>
</feature>
<feature type="transmembrane region" description="Helical; Signal-anchor for type III membrane protein" evidence="1">
    <location>
        <begin position="23"/>
        <end position="43"/>
    </location>
</feature>
<feature type="topological domain" description="Intravirion" evidence="1">
    <location>
        <begin position="44"/>
        <end position="97"/>
    </location>
</feature>
<feature type="region of interest" description="Disordered" evidence="2">
    <location>
        <begin position="60"/>
        <end position="84"/>
    </location>
</feature>
<feature type="site" description="Essential for channel activity, possibly by being protonated during channel activation, and by forming the channel gate and the selective filter" evidence="1">
    <location>
        <position position="37"/>
    </location>
</feature>
<feature type="site" description="Seems to be involved in pH gating" evidence="1">
    <location>
        <position position="41"/>
    </location>
</feature>
<feature type="modified residue" description="Phosphoserine; by host" evidence="1">
    <location>
        <position position="64"/>
    </location>
</feature>
<feature type="modified residue" description="Phosphoserine; by host" evidence="1">
    <location>
        <position position="82"/>
    </location>
</feature>
<feature type="lipid moiety-binding region" description="S-palmitoyl cysteine; by host" evidence="1">
    <location>
        <position position="50"/>
    </location>
</feature>
<feature type="disulfide bond" description="Interchain (with C-17)" evidence="1">
    <location>
        <position position="17"/>
    </location>
</feature>
<feature type="disulfide bond" description="Interchain (with C-19)" evidence="1">
    <location>
        <position position="19"/>
    </location>
</feature>
<comment type="function">
    <text evidence="1">Forms a proton-selective ion channel that is necessary for the efficient release of the viral genome during virus entry. After attaching to the cell surface, the virion enters the cell by endocytosis. Acidification of the endosome triggers M2 ion channel activity. The influx of protons into virion interior is believed to disrupt interactions between the viral ribonucleoprotein (RNP), matrix protein 1 (M1), and lipid bilayers, thereby freeing the viral genome from interaction with viral proteins and enabling RNA segments to migrate to the host cell nucleus, where influenza virus RNA transcription and replication occur. Also plays a role in viral proteins secretory pathway. Elevates the intravesicular pH of normally acidic compartments, such as trans-Golgi network, preventing newly formed hemagglutinin from premature switching to the fusion-active conformation.</text>
</comment>
<comment type="activity regulation">
    <text>The M2 protein from most influenza A strains is inhibited by amantadine and rimantadine, resulting in viral uncoating incapacity. Emergence of amantadine-resistant variants is usually rapid.</text>
</comment>
<comment type="subunit">
    <text evidence="1">Homotetramer; composed of two disulfide-linked dimers held together by non-covalent interactions. May interact with matrix protein 1.</text>
</comment>
<comment type="subcellular location">
    <subcellularLocation>
        <location evidence="1">Virion membrane</location>
    </subcellularLocation>
    <subcellularLocation>
        <location evidence="1">Host apical cell membrane</location>
        <topology evidence="1">Single-pass type III membrane protein</topology>
    </subcellularLocation>
    <text evidence="1">Abundantly expressed at the apical plasma membrane in infected polarized epithelial cells, in close proximity to budding and assembled virions. Minor component of virions (only 16-20 molecules/virion).</text>
</comment>
<comment type="alternative products">
    <event type="alternative splicing"/>
    <isoform>
        <id>Q0A447-1</id>
        <name>M2</name>
        <sequence type="displayed"/>
    </isoform>
    <isoform>
        <id>Q0A446-1</id>
        <name>M1</name>
        <sequence type="external"/>
    </isoform>
    <text>Only the first 9 residues are shared by the 2 isoforms.</text>
</comment>
<comment type="domain">
    <text evidence="1">Cytoplasmic tail plays an important role in virion assembly and morphogenesis.</text>
</comment>
<comment type="miscellaneous">
    <text evidence="1">When the channel is activated, one or more imidazole moieties of His-37 probably become bi-protonated.</text>
</comment>
<comment type="similarity">
    <text evidence="1">Belongs to the influenza viruses matrix protein M2 family.</text>
</comment>
<gene>
    <name evidence="1" type="primary">M</name>
</gene>
<organism>
    <name type="scientific">Influenza A virus (strain A/Duck/Germany/1949 H10N7)</name>
    <dbReference type="NCBI Taxonomy" id="382838"/>
    <lineage>
        <taxon>Viruses</taxon>
        <taxon>Riboviria</taxon>
        <taxon>Orthornavirae</taxon>
        <taxon>Negarnaviricota</taxon>
        <taxon>Polyploviricotina</taxon>
        <taxon>Insthoviricetes</taxon>
        <taxon>Articulavirales</taxon>
        <taxon>Orthomyxoviridae</taxon>
        <taxon>Alphainfluenzavirus</taxon>
        <taxon>Alphainfluenzavirus influenzae</taxon>
        <taxon>Influenza A virus</taxon>
    </lineage>
</organism>
<accession>Q0A447</accession>
<reference key="1">
    <citation type="journal article" date="2006" name="Science">
        <title>Large-scale sequence analysis of avian influenza isolates.</title>
        <authorList>
            <person name="Obenauer J.C."/>
            <person name="Denson J."/>
            <person name="Mehta P.K."/>
            <person name="Su X."/>
            <person name="Mukatira S."/>
            <person name="Finkelstein D.B."/>
            <person name="Xu X."/>
            <person name="Wang J."/>
            <person name="Ma J."/>
            <person name="Fan Y."/>
            <person name="Rakestraw K.M."/>
            <person name="Webster R.G."/>
            <person name="Hoffmann E."/>
            <person name="Krauss S."/>
            <person name="Zheng J."/>
            <person name="Zhang Z."/>
            <person name="Naeve C.W."/>
        </authorList>
    </citation>
    <scope>NUCLEOTIDE SEQUENCE [GENOMIC RNA]</scope>
</reference>
<organismHost>
    <name type="scientific">Aves</name>
    <dbReference type="NCBI Taxonomy" id="8782"/>
</organismHost>